<feature type="chain" id="PRO_0000142244" description="Imidazole glycerol phosphate synthase subunit HisF">
    <location>
        <begin position="1"/>
        <end position="254"/>
    </location>
</feature>
<feature type="active site" evidence="1">
    <location>
        <position position="12"/>
    </location>
</feature>
<feature type="active site" evidence="1">
    <location>
        <position position="132"/>
    </location>
</feature>
<sequence>MPLAKRIIPCLDIRDGRVVKNVQFHLNTWDAGDPVALAAEYDRQGADEIVFLDINASWEGRSATLDVLSRAAEQVFVPLTIGGGVSAVEHVKAYLRAGADKVSVNTAAVQRPDLIDEIADLFGSSTLVVAIDCKRRPEGGWEVYLHGGRTPTGIDAVAWAEEAARRGAGELLVTSMDADGTRQGYDIALHQALADAVGVPVIASGGAGSPEDILEVLTVGRADAALAASIFHSGRHTVGEVKAFLRERGVLVRS</sequence>
<gene>
    <name evidence="1" type="primary">hisF</name>
    <name type="ordered locus">STH2833</name>
</gene>
<protein>
    <recommendedName>
        <fullName evidence="1">Imidazole glycerol phosphate synthase subunit HisF</fullName>
        <ecNumber evidence="1">4.3.2.10</ecNumber>
    </recommendedName>
    <alternativeName>
        <fullName evidence="1">IGP synthase cyclase subunit</fullName>
    </alternativeName>
    <alternativeName>
        <fullName evidence="1">IGP synthase subunit HisF</fullName>
    </alternativeName>
    <alternativeName>
        <fullName evidence="1">ImGP synthase subunit HisF</fullName>
        <shortName evidence="1">IGPS subunit HisF</shortName>
    </alternativeName>
</protein>
<proteinExistence type="inferred from homology"/>
<keyword id="KW-0028">Amino-acid biosynthesis</keyword>
<keyword id="KW-0963">Cytoplasm</keyword>
<keyword id="KW-0368">Histidine biosynthesis</keyword>
<keyword id="KW-0456">Lyase</keyword>
<keyword id="KW-1185">Reference proteome</keyword>
<reference key="1">
    <citation type="journal article" date="2004" name="Nucleic Acids Res.">
        <title>Genome sequence of Symbiobacterium thermophilum, an uncultivable bacterium that depends on microbial commensalism.</title>
        <authorList>
            <person name="Ueda K."/>
            <person name="Yamashita A."/>
            <person name="Ishikawa J."/>
            <person name="Shimada M."/>
            <person name="Watsuji T."/>
            <person name="Morimura K."/>
            <person name="Ikeda H."/>
            <person name="Hattori M."/>
            <person name="Beppu T."/>
        </authorList>
    </citation>
    <scope>NUCLEOTIDE SEQUENCE [LARGE SCALE GENOMIC DNA]</scope>
    <source>
        <strain>DSM 24528 / JCM 14929 / IAM 14863 / T</strain>
    </source>
</reference>
<name>HIS6_SYMTH</name>
<accession>Q67KI0</accession>
<evidence type="ECO:0000255" key="1">
    <source>
        <dbReference type="HAMAP-Rule" id="MF_01013"/>
    </source>
</evidence>
<dbReference type="EC" id="4.3.2.10" evidence="1"/>
<dbReference type="EMBL" id="AP006840">
    <property type="protein sequence ID" value="BAD41818.1"/>
    <property type="molecule type" value="Genomic_DNA"/>
</dbReference>
<dbReference type="RefSeq" id="WP_011196952.1">
    <property type="nucleotide sequence ID" value="NC_006177.1"/>
</dbReference>
<dbReference type="SMR" id="Q67KI0"/>
<dbReference type="STRING" id="292459.STH2833"/>
<dbReference type="KEGG" id="sth:STH2833"/>
<dbReference type="eggNOG" id="COG0107">
    <property type="taxonomic scope" value="Bacteria"/>
</dbReference>
<dbReference type="HOGENOM" id="CLU_048577_4_0_9"/>
<dbReference type="OrthoDB" id="9781903at2"/>
<dbReference type="UniPathway" id="UPA00031">
    <property type="reaction ID" value="UER00010"/>
</dbReference>
<dbReference type="Proteomes" id="UP000000417">
    <property type="component" value="Chromosome"/>
</dbReference>
<dbReference type="GO" id="GO:0005737">
    <property type="term" value="C:cytoplasm"/>
    <property type="evidence" value="ECO:0007669"/>
    <property type="project" value="UniProtKB-SubCell"/>
</dbReference>
<dbReference type="GO" id="GO:0000107">
    <property type="term" value="F:imidazoleglycerol-phosphate synthase activity"/>
    <property type="evidence" value="ECO:0007669"/>
    <property type="project" value="UniProtKB-UniRule"/>
</dbReference>
<dbReference type="GO" id="GO:0016829">
    <property type="term" value="F:lyase activity"/>
    <property type="evidence" value="ECO:0007669"/>
    <property type="project" value="UniProtKB-KW"/>
</dbReference>
<dbReference type="GO" id="GO:0000105">
    <property type="term" value="P:L-histidine biosynthetic process"/>
    <property type="evidence" value="ECO:0007669"/>
    <property type="project" value="UniProtKB-UniRule"/>
</dbReference>
<dbReference type="CDD" id="cd04731">
    <property type="entry name" value="HisF"/>
    <property type="match status" value="1"/>
</dbReference>
<dbReference type="Gene3D" id="3.20.20.70">
    <property type="entry name" value="Aldolase class I"/>
    <property type="match status" value="1"/>
</dbReference>
<dbReference type="HAMAP" id="MF_01013">
    <property type="entry name" value="HisF"/>
    <property type="match status" value="1"/>
</dbReference>
<dbReference type="InterPro" id="IPR013785">
    <property type="entry name" value="Aldolase_TIM"/>
</dbReference>
<dbReference type="InterPro" id="IPR006062">
    <property type="entry name" value="His_biosynth"/>
</dbReference>
<dbReference type="InterPro" id="IPR004651">
    <property type="entry name" value="HisF"/>
</dbReference>
<dbReference type="InterPro" id="IPR050064">
    <property type="entry name" value="IGPS_HisA/HisF"/>
</dbReference>
<dbReference type="InterPro" id="IPR011060">
    <property type="entry name" value="RibuloseP-bd_barrel"/>
</dbReference>
<dbReference type="NCBIfam" id="TIGR00735">
    <property type="entry name" value="hisF"/>
    <property type="match status" value="1"/>
</dbReference>
<dbReference type="PANTHER" id="PTHR21235:SF2">
    <property type="entry name" value="IMIDAZOLE GLYCEROL PHOSPHATE SYNTHASE HISHF"/>
    <property type="match status" value="1"/>
</dbReference>
<dbReference type="PANTHER" id="PTHR21235">
    <property type="entry name" value="IMIDAZOLE GLYCEROL PHOSPHATE SYNTHASE SUBUNIT HISF/H IGP SYNTHASE SUBUNIT HISF/H"/>
    <property type="match status" value="1"/>
</dbReference>
<dbReference type="Pfam" id="PF00977">
    <property type="entry name" value="His_biosynth"/>
    <property type="match status" value="1"/>
</dbReference>
<dbReference type="SUPFAM" id="SSF51366">
    <property type="entry name" value="Ribulose-phoshate binding barrel"/>
    <property type="match status" value="1"/>
</dbReference>
<organism>
    <name type="scientific">Symbiobacterium thermophilum (strain DSM 24528 / JCM 14929 / IAM 14863 / T)</name>
    <dbReference type="NCBI Taxonomy" id="292459"/>
    <lineage>
        <taxon>Bacteria</taxon>
        <taxon>Bacillati</taxon>
        <taxon>Bacillota</taxon>
        <taxon>Clostridia</taxon>
        <taxon>Eubacteriales</taxon>
        <taxon>Symbiobacteriaceae</taxon>
        <taxon>Symbiobacterium</taxon>
    </lineage>
</organism>
<comment type="function">
    <text evidence="1">IGPS catalyzes the conversion of PRFAR and glutamine to IGP, AICAR and glutamate. The HisF subunit catalyzes the cyclization activity that produces IGP and AICAR from PRFAR using the ammonia provided by the HisH subunit.</text>
</comment>
<comment type="catalytic activity">
    <reaction evidence="1">
        <text>5-[(5-phospho-1-deoxy-D-ribulos-1-ylimino)methylamino]-1-(5-phospho-beta-D-ribosyl)imidazole-4-carboxamide + L-glutamine = D-erythro-1-(imidazol-4-yl)glycerol 3-phosphate + 5-amino-1-(5-phospho-beta-D-ribosyl)imidazole-4-carboxamide + L-glutamate + H(+)</text>
        <dbReference type="Rhea" id="RHEA:24793"/>
        <dbReference type="ChEBI" id="CHEBI:15378"/>
        <dbReference type="ChEBI" id="CHEBI:29985"/>
        <dbReference type="ChEBI" id="CHEBI:58278"/>
        <dbReference type="ChEBI" id="CHEBI:58359"/>
        <dbReference type="ChEBI" id="CHEBI:58475"/>
        <dbReference type="ChEBI" id="CHEBI:58525"/>
        <dbReference type="EC" id="4.3.2.10"/>
    </reaction>
</comment>
<comment type="pathway">
    <text evidence="1">Amino-acid biosynthesis; L-histidine biosynthesis; L-histidine from 5-phospho-alpha-D-ribose 1-diphosphate: step 5/9.</text>
</comment>
<comment type="subunit">
    <text evidence="1">Heterodimer of HisH and HisF.</text>
</comment>
<comment type="subcellular location">
    <subcellularLocation>
        <location evidence="1">Cytoplasm</location>
    </subcellularLocation>
</comment>
<comment type="similarity">
    <text evidence="1">Belongs to the HisA/HisF family.</text>
</comment>